<proteinExistence type="inferred from homology"/>
<dbReference type="EMBL" id="CP000308">
    <property type="protein sequence ID" value="ABG12388.1"/>
    <property type="molecule type" value="Genomic_DNA"/>
</dbReference>
<dbReference type="RefSeq" id="WP_002215759.1">
    <property type="nucleotide sequence ID" value="NZ_CP009906.1"/>
</dbReference>
<dbReference type="SMR" id="Q1CAY4"/>
<dbReference type="KEGG" id="ypa:YPA_0420"/>
<dbReference type="Proteomes" id="UP000001971">
    <property type="component" value="Chromosome"/>
</dbReference>
<dbReference type="GO" id="GO:0009279">
    <property type="term" value="C:cell outer membrane"/>
    <property type="evidence" value="ECO:0007669"/>
    <property type="project" value="UniProtKB-SubCell"/>
</dbReference>
<dbReference type="GO" id="GO:0046930">
    <property type="term" value="C:pore complex"/>
    <property type="evidence" value="ECO:0007669"/>
    <property type="project" value="UniProtKB-KW"/>
</dbReference>
<dbReference type="GO" id="GO:0042958">
    <property type="term" value="F:maltodextrin transmembrane transporter activity"/>
    <property type="evidence" value="ECO:0007669"/>
    <property type="project" value="InterPro"/>
</dbReference>
<dbReference type="GO" id="GO:0015481">
    <property type="term" value="F:maltose transporting porin activity"/>
    <property type="evidence" value="ECO:0007669"/>
    <property type="project" value="InterPro"/>
</dbReference>
<dbReference type="GO" id="GO:0006811">
    <property type="term" value="P:monoatomic ion transport"/>
    <property type="evidence" value="ECO:0007669"/>
    <property type="project" value="UniProtKB-KW"/>
</dbReference>
<dbReference type="CDD" id="cd01346">
    <property type="entry name" value="Maltoporin-like"/>
    <property type="match status" value="1"/>
</dbReference>
<dbReference type="Gene3D" id="2.40.170.10">
    <property type="entry name" value="Porin, LamB type"/>
    <property type="match status" value="1"/>
</dbReference>
<dbReference type="HAMAP" id="MF_01301">
    <property type="entry name" value="LamB"/>
    <property type="match status" value="1"/>
</dbReference>
<dbReference type="InterPro" id="IPR050286">
    <property type="entry name" value="G_neg_Bact_CarbUptk_Porin"/>
</dbReference>
<dbReference type="InterPro" id="IPR023738">
    <property type="entry name" value="Maltoporin"/>
</dbReference>
<dbReference type="InterPro" id="IPR003192">
    <property type="entry name" value="Porin_LamB"/>
</dbReference>
<dbReference type="InterPro" id="IPR036998">
    <property type="entry name" value="Porin_LamB_sf"/>
</dbReference>
<dbReference type="NCBIfam" id="NF006860">
    <property type="entry name" value="PRK09360.1"/>
    <property type="match status" value="1"/>
</dbReference>
<dbReference type="NCBIfam" id="NF009061">
    <property type="entry name" value="PRK12395.1"/>
    <property type="match status" value="1"/>
</dbReference>
<dbReference type="PANTHER" id="PTHR38762">
    <property type="entry name" value="CRYPTIC OUTER MEMBRANE PORIN BGLH-RELATED"/>
    <property type="match status" value="1"/>
</dbReference>
<dbReference type="PANTHER" id="PTHR38762:SF1">
    <property type="entry name" value="CRYPTIC OUTER MEMBRANE PORIN BGLH-RELATED"/>
    <property type="match status" value="1"/>
</dbReference>
<dbReference type="Pfam" id="PF02264">
    <property type="entry name" value="LamB"/>
    <property type="match status" value="1"/>
</dbReference>
<dbReference type="SUPFAM" id="SSF56935">
    <property type="entry name" value="Porins"/>
    <property type="match status" value="1"/>
</dbReference>
<reference key="1">
    <citation type="journal article" date="2006" name="J. Bacteriol.">
        <title>Complete genome sequence of Yersinia pestis strains Antiqua and Nepal516: evidence of gene reduction in an emerging pathogen.</title>
        <authorList>
            <person name="Chain P.S.G."/>
            <person name="Hu P."/>
            <person name="Malfatti S.A."/>
            <person name="Radnedge L."/>
            <person name="Larimer F."/>
            <person name="Vergez L.M."/>
            <person name="Worsham P."/>
            <person name="Chu M.C."/>
            <person name="Andersen G.L."/>
        </authorList>
    </citation>
    <scope>NUCLEOTIDE SEQUENCE [LARGE SCALE GENOMIC DNA]</scope>
    <source>
        <strain>Antiqua</strain>
    </source>
</reference>
<sequence length="419" mass="46264">MKTSLRTLSVALAAALVSPSVLAIEKIDFHGYMRAGVGVSSDGGLAEWQKTMVGRLGNESDTYGEIGLGAEVYKKEDVSFYLDSMVSMLSDGSNDSETTIGDDAQFGLRQLNLQIKGLIPGDKEAVIWGGKRYYQRHDLHIIDTKYWNISGSGAGIENYTVGPGAVSVAWVRGDANDVDTRITGDSDVNINYIDVRYAGFKPWAGSWTEVGIDYAMPNPTKQQKEYGGLYDADNAVMLTGEISQDMFGGYNKLVLQYANKGLAQNMISQGGGWYDMWHKTDEAKGYRVINTGLIPITDKFSFNHVLTWGSANDITEYTDKTNLISLVGRAQYQFTQYVRAIGEVGGFYQKDTYHNGSNYKQGGEKYTIALGLAEGPDFLSRPELRVFASYLNDSENGKPFEDGTSNDTWNFGVQVEAWW</sequence>
<feature type="signal peptide" evidence="1">
    <location>
        <begin position="1"/>
        <end position="23"/>
    </location>
</feature>
<feature type="chain" id="PRO_5000115778" description="Maltoporin 2">
    <location>
        <begin position="24"/>
        <end position="419"/>
    </location>
</feature>
<feature type="site" description="Greasy slide, important in sugar transport" evidence="1">
    <location>
        <position position="32"/>
    </location>
</feature>
<feature type="site" description="Greasy slide, important in sugar transport" evidence="1">
    <location>
        <position position="63"/>
    </location>
</feature>
<feature type="site" description="Greasy slide, important in sugar transport" evidence="1">
    <location>
        <position position="250"/>
    </location>
</feature>
<feature type="site" description="Greasy slide, important in sugar transport" evidence="1">
    <location>
        <position position="418"/>
    </location>
</feature>
<gene>
    <name evidence="1" type="primary">lamB2</name>
    <name type="ordered locus">YPA_0420</name>
</gene>
<evidence type="ECO:0000255" key="1">
    <source>
        <dbReference type="HAMAP-Rule" id="MF_01301"/>
    </source>
</evidence>
<protein>
    <recommendedName>
        <fullName evidence="1">Maltoporin 2</fullName>
    </recommendedName>
    <alternativeName>
        <fullName evidence="1">Maltose-inducible porin 2</fullName>
    </alternativeName>
</protein>
<organism>
    <name type="scientific">Yersinia pestis bv. Antiqua (strain Antiqua)</name>
    <dbReference type="NCBI Taxonomy" id="360102"/>
    <lineage>
        <taxon>Bacteria</taxon>
        <taxon>Pseudomonadati</taxon>
        <taxon>Pseudomonadota</taxon>
        <taxon>Gammaproteobacteria</taxon>
        <taxon>Enterobacterales</taxon>
        <taxon>Yersiniaceae</taxon>
        <taxon>Yersinia</taxon>
    </lineage>
</organism>
<comment type="function">
    <text evidence="1">Involved in the transport of maltose and maltodextrins.</text>
</comment>
<comment type="catalytic activity">
    <reaction evidence="1">
        <text>beta-maltose(in) = beta-maltose(out)</text>
        <dbReference type="Rhea" id="RHEA:29731"/>
        <dbReference type="ChEBI" id="CHEBI:18147"/>
    </reaction>
</comment>
<comment type="subunit">
    <text evidence="1">Homotrimer formed of three 18-stranded antiparallel beta-barrels, containing three independent channels.</text>
</comment>
<comment type="subcellular location">
    <subcellularLocation>
        <location evidence="1">Cell outer membrane</location>
        <topology evidence="1">Multi-pass membrane protein</topology>
    </subcellularLocation>
</comment>
<comment type="induction">
    <text evidence="1">By maltose.</text>
</comment>
<comment type="similarity">
    <text evidence="1">Belongs to the porin LamB (TC 1.B.3) family.</text>
</comment>
<accession>Q1CAY4</accession>
<name>LAMB2_YERPA</name>
<keyword id="KW-0998">Cell outer membrane</keyword>
<keyword id="KW-0406">Ion transport</keyword>
<keyword id="KW-0472">Membrane</keyword>
<keyword id="KW-0626">Porin</keyword>
<keyword id="KW-0732">Signal</keyword>
<keyword id="KW-0762">Sugar transport</keyword>
<keyword id="KW-0812">Transmembrane</keyword>
<keyword id="KW-1134">Transmembrane beta strand</keyword>
<keyword id="KW-0813">Transport</keyword>